<organism>
    <name type="scientific">Mycobacterium leprae (strain Br4923)</name>
    <dbReference type="NCBI Taxonomy" id="561304"/>
    <lineage>
        <taxon>Bacteria</taxon>
        <taxon>Bacillati</taxon>
        <taxon>Actinomycetota</taxon>
        <taxon>Actinomycetes</taxon>
        <taxon>Mycobacteriales</taxon>
        <taxon>Mycobacteriaceae</taxon>
        <taxon>Mycobacterium</taxon>
    </lineage>
</organism>
<name>NTPP_MYCLB</name>
<protein>
    <recommendedName>
        <fullName evidence="1">Nucleoside triphosphate pyrophosphatase</fullName>
        <ecNumber evidence="1">3.6.1.9</ecNumber>
    </recommendedName>
    <alternativeName>
        <fullName evidence="1">Nucleotide pyrophosphatase</fullName>
        <shortName evidence="1">Nucleotide PPase</shortName>
    </alternativeName>
</protein>
<comment type="function">
    <text evidence="1">Nucleoside triphosphate pyrophosphatase. May have a dual role in cell division arrest and in preventing the incorporation of modified nucleotides into cellular nucleic acids.</text>
</comment>
<comment type="catalytic activity">
    <reaction evidence="1">
        <text>a ribonucleoside 5'-triphosphate + H2O = a ribonucleoside 5'-phosphate + diphosphate + H(+)</text>
        <dbReference type="Rhea" id="RHEA:23996"/>
        <dbReference type="ChEBI" id="CHEBI:15377"/>
        <dbReference type="ChEBI" id="CHEBI:15378"/>
        <dbReference type="ChEBI" id="CHEBI:33019"/>
        <dbReference type="ChEBI" id="CHEBI:58043"/>
        <dbReference type="ChEBI" id="CHEBI:61557"/>
        <dbReference type="EC" id="3.6.1.9"/>
    </reaction>
</comment>
<comment type="catalytic activity">
    <reaction evidence="1">
        <text>a 2'-deoxyribonucleoside 5'-triphosphate + H2O = a 2'-deoxyribonucleoside 5'-phosphate + diphosphate + H(+)</text>
        <dbReference type="Rhea" id="RHEA:44644"/>
        <dbReference type="ChEBI" id="CHEBI:15377"/>
        <dbReference type="ChEBI" id="CHEBI:15378"/>
        <dbReference type="ChEBI" id="CHEBI:33019"/>
        <dbReference type="ChEBI" id="CHEBI:61560"/>
        <dbReference type="ChEBI" id="CHEBI:65317"/>
        <dbReference type="EC" id="3.6.1.9"/>
    </reaction>
</comment>
<comment type="cofactor">
    <cofactor evidence="1">
        <name>a divalent metal cation</name>
        <dbReference type="ChEBI" id="CHEBI:60240"/>
    </cofactor>
</comment>
<comment type="subcellular location">
    <subcellularLocation>
        <location evidence="1">Cytoplasm</location>
    </subcellularLocation>
</comment>
<comment type="similarity">
    <text evidence="1">Belongs to the Maf family.</text>
</comment>
<sequence length="213" mass="22061">MTRLVLGSASAGRLKVLRQAGIDPLVAASGVDEDLVTAGLGSDTSPRDVVSTLARAKATQVAAALSHAVADDCVVISCDSQLSIDGRLYGKPQSVANARQQWQSMAGRAGQLYTGHCVIRLLNNETTYSVDETSMTTICFGNPSAEDLEAYLACGESLQVAGGFTLDGLGGWFIDAVYGDPSTVVGIGLPLTRSLLSRAGLSIAAMWAANPVI</sequence>
<proteinExistence type="inferred from homology"/>
<feature type="chain" id="PRO_1000146295" description="Nucleoside triphosphate pyrophosphatase">
    <location>
        <begin position="1"/>
        <end position="213"/>
    </location>
</feature>
<feature type="active site" description="Proton acceptor" evidence="1">
    <location>
        <position position="79"/>
    </location>
</feature>
<evidence type="ECO:0000255" key="1">
    <source>
        <dbReference type="HAMAP-Rule" id="MF_00528"/>
    </source>
</evidence>
<keyword id="KW-0963">Cytoplasm</keyword>
<keyword id="KW-0378">Hydrolase</keyword>
<keyword id="KW-0546">Nucleotide metabolism</keyword>
<accession>B8ZUX8</accession>
<dbReference type="EC" id="3.6.1.9" evidence="1"/>
<dbReference type="EMBL" id="FM211192">
    <property type="protein sequence ID" value="CAR70823.1"/>
    <property type="molecule type" value="Genomic_DNA"/>
</dbReference>
<dbReference type="SMR" id="B8ZUX8"/>
<dbReference type="KEGG" id="mlb:MLBr00729"/>
<dbReference type="HOGENOM" id="CLU_040416_1_2_11"/>
<dbReference type="Proteomes" id="UP000006900">
    <property type="component" value="Chromosome"/>
</dbReference>
<dbReference type="GO" id="GO:0005737">
    <property type="term" value="C:cytoplasm"/>
    <property type="evidence" value="ECO:0007669"/>
    <property type="project" value="UniProtKB-SubCell"/>
</dbReference>
<dbReference type="GO" id="GO:0047429">
    <property type="term" value="F:nucleoside triphosphate diphosphatase activity"/>
    <property type="evidence" value="ECO:0007669"/>
    <property type="project" value="UniProtKB-EC"/>
</dbReference>
<dbReference type="GO" id="GO:0009117">
    <property type="term" value="P:nucleotide metabolic process"/>
    <property type="evidence" value="ECO:0007669"/>
    <property type="project" value="UniProtKB-KW"/>
</dbReference>
<dbReference type="CDD" id="cd00555">
    <property type="entry name" value="Maf"/>
    <property type="match status" value="1"/>
</dbReference>
<dbReference type="Gene3D" id="3.90.950.10">
    <property type="match status" value="1"/>
</dbReference>
<dbReference type="HAMAP" id="MF_00528">
    <property type="entry name" value="Maf"/>
    <property type="match status" value="1"/>
</dbReference>
<dbReference type="InterPro" id="IPR029001">
    <property type="entry name" value="ITPase-like_fam"/>
</dbReference>
<dbReference type="InterPro" id="IPR003697">
    <property type="entry name" value="Maf-like"/>
</dbReference>
<dbReference type="NCBIfam" id="TIGR00172">
    <property type="entry name" value="maf"/>
    <property type="match status" value="1"/>
</dbReference>
<dbReference type="PANTHER" id="PTHR43213">
    <property type="entry name" value="BIFUNCTIONAL DTTP/UTP PYROPHOSPHATASE/METHYLTRANSFERASE PROTEIN-RELATED"/>
    <property type="match status" value="1"/>
</dbReference>
<dbReference type="PANTHER" id="PTHR43213:SF5">
    <property type="entry name" value="BIFUNCTIONAL DTTP_UTP PYROPHOSPHATASE_METHYLTRANSFERASE PROTEIN-RELATED"/>
    <property type="match status" value="1"/>
</dbReference>
<dbReference type="Pfam" id="PF02545">
    <property type="entry name" value="Maf"/>
    <property type="match status" value="1"/>
</dbReference>
<dbReference type="PIRSF" id="PIRSF006305">
    <property type="entry name" value="Maf"/>
    <property type="match status" value="1"/>
</dbReference>
<dbReference type="SUPFAM" id="SSF52972">
    <property type="entry name" value="ITPase-like"/>
    <property type="match status" value="1"/>
</dbReference>
<gene>
    <name type="ordered locus">MLBr00729</name>
</gene>
<reference key="1">
    <citation type="journal article" date="2009" name="Nat. Genet.">
        <title>Comparative genomic and phylogeographic analysis of Mycobacterium leprae.</title>
        <authorList>
            <person name="Monot M."/>
            <person name="Honore N."/>
            <person name="Garnier T."/>
            <person name="Zidane N."/>
            <person name="Sherafi D."/>
            <person name="Paniz-Mondolfi A."/>
            <person name="Matsuoka M."/>
            <person name="Taylor G.M."/>
            <person name="Donoghue H.D."/>
            <person name="Bouwman A."/>
            <person name="Mays S."/>
            <person name="Watson C."/>
            <person name="Lockwood D."/>
            <person name="Khamispour A."/>
            <person name="Dowlati Y."/>
            <person name="Jianping S."/>
            <person name="Rea T.H."/>
            <person name="Vera-Cabrera L."/>
            <person name="Stefani M.M."/>
            <person name="Banu S."/>
            <person name="Macdonald M."/>
            <person name="Sapkota B.R."/>
            <person name="Spencer J.S."/>
            <person name="Thomas J."/>
            <person name="Harshman K."/>
            <person name="Singh P."/>
            <person name="Busso P."/>
            <person name="Gattiker A."/>
            <person name="Rougemont J."/>
            <person name="Brennan P.J."/>
            <person name="Cole S.T."/>
        </authorList>
    </citation>
    <scope>NUCLEOTIDE SEQUENCE [LARGE SCALE GENOMIC DNA]</scope>
    <source>
        <strain>Br4923</strain>
    </source>
</reference>